<feature type="chain" id="PRO_0000404150" description="Bidirectional sugar transporter SWEET15">
    <location>
        <begin position="1"/>
        <end position="319"/>
    </location>
</feature>
<feature type="topological domain" description="Extracellular" evidence="2">
    <location>
        <begin position="1"/>
        <end position="10"/>
    </location>
</feature>
<feature type="transmembrane region" description="Helical; Name=1" evidence="2">
    <location>
        <begin position="11"/>
        <end position="31"/>
    </location>
</feature>
<feature type="topological domain" description="Cytoplasmic" evidence="2">
    <location>
        <begin position="32"/>
        <end position="50"/>
    </location>
</feature>
<feature type="transmembrane region" description="Helical; Name=2" evidence="2">
    <location>
        <begin position="51"/>
        <end position="71"/>
    </location>
</feature>
<feature type="topological domain" description="Extracellular" evidence="2">
    <location>
        <position position="72"/>
    </location>
</feature>
<feature type="transmembrane region" description="Helical; Name=3" evidence="2">
    <location>
        <begin position="73"/>
        <end position="93"/>
    </location>
</feature>
<feature type="topological domain" description="Cytoplasmic" evidence="2">
    <location>
        <begin position="94"/>
        <end position="106"/>
    </location>
</feature>
<feature type="transmembrane region" description="Helical; Name=4" evidence="2">
    <location>
        <begin position="107"/>
        <end position="127"/>
    </location>
</feature>
<feature type="topological domain" description="Extracellular" evidence="2">
    <location>
        <begin position="128"/>
        <end position="134"/>
    </location>
</feature>
<feature type="transmembrane region" description="Helical; Name=5" evidence="2">
    <location>
        <begin position="135"/>
        <end position="155"/>
    </location>
</feature>
<feature type="topological domain" description="Cytoplasmic" evidence="2">
    <location>
        <begin position="156"/>
        <end position="167"/>
    </location>
</feature>
<feature type="transmembrane region" description="Helical; Name=6" evidence="2">
    <location>
        <begin position="168"/>
        <end position="188"/>
    </location>
</feature>
<feature type="topological domain" description="Extracellular" evidence="2">
    <location>
        <begin position="189"/>
        <end position="191"/>
    </location>
</feature>
<feature type="transmembrane region" description="Helical; Name=7" evidence="2">
    <location>
        <begin position="192"/>
        <end position="212"/>
    </location>
</feature>
<feature type="topological domain" description="Cytoplasmic" evidence="2">
    <location>
        <begin position="213"/>
        <end position="319"/>
    </location>
</feature>
<feature type="domain" description="MtN3/slv 1">
    <location>
        <begin position="13"/>
        <end position="99"/>
    </location>
</feature>
<feature type="domain" description="MtN3/slv 2">
    <location>
        <begin position="135"/>
        <end position="219"/>
    </location>
</feature>
<organism>
    <name type="scientific">Oryza sativa subsp. indica</name>
    <name type="common">Rice</name>
    <dbReference type="NCBI Taxonomy" id="39946"/>
    <lineage>
        <taxon>Eukaryota</taxon>
        <taxon>Viridiplantae</taxon>
        <taxon>Streptophyta</taxon>
        <taxon>Embryophyta</taxon>
        <taxon>Tracheophyta</taxon>
        <taxon>Spermatophyta</taxon>
        <taxon>Magnoliopsida</taxon>
        <taxon>Liliopsida</taxon>
        <taxon>Poales</taxon>
        <taxon>Poaceae</taxon>
        <taxon>BOP clade</taxon>
        <taxon>Oryzoideae</taxon>
        <taxon>Oryzeae</taxon>
        <taxon>Oryzinae</taxon>
        <taxon>Oryza</taxon>
        <taxon>Oryza sativa</taxon>
    </lineage>
</organism>
<evidence type="ECO:0000250" key="1">
    <source>
        <dbReference type="UniProtKB" id="Q8L9J7"/>
    </source>
</evidence>
<evidence type="ECO:0000255" key="2"/>
<evidence type="ECO:0000305" key="3"/>
<accession>A2X5B4</accession>
<comment type="function">
    <text evidence="1">Mediates both low-affinity uptake and efflux of sugar across the plasma membrane.</text>
</comment>
<comment type="subunit">
    <text evidence="1">Forms homooligomers and/or heterooligomers.</text>
</comment>
<comment type="subcellular location">
    <subcellularLocation>
        <location evidence="1">Cell membrane</location>
        <topology evidence="1">Multi-pass membrane protein</topology>
    </subcellularLocation>
</comment>
<comment type="similarity">
    <text evidence="3">Belongs to the SWEET sugar transporter family.</text>
</comment>
<gene>
    <name type="primary">SWEET15</name>
    <name type="ORF">OsI_07385</name>
</gene>
<sequence length="319" mass="34924">MAFMSMERSTWAFTFGILGNLISLMVFLSPLPTFYRVYRKKSTEGFQSTPYVVTLFSCMLWMYYAFVKSGAELLVTINGVGCVIETVYLAMYLAYAPKSARMLTAKMLLGLNIGLFGVIALVTLLLSRGELRVHVLGWICVAVSLSVFAAPLSIIRLVIRTKSVEFMPFSLSFFLVLSAVIWFLYGLLKKDVFVALPNVLGFVFGVAQMALYMAYRSKKPLVASSSSAAVAAGLETKLPEHVKEVQAVAKGAVAAAPEGRISCGAEVHPIDDVMPSEVVEVKVDDEETNRTDEMAGDGDHAMVRTEQIIKPDMAIVVEV</sequence>
<dbReference type="EMBL" id="CM000127">
    <property type="protein sequence ID" value="EAY86024.1"/>
    <property type="molecule type" value="Genomic_DNA"/>
</dbReference>
<dbReference type="SMR" id="A2X5B4"/>
<dbReference type="EnsemblPlants" id="BGIOSGA006395-TA">
    <property type="protein sequence ID" value="BGIOSGA006395-PA"/>
    <property type="gene ID" value="BGIOSGA006395"/>
</dbReference>
<dbReference type="EnsemblPlants" id="OsKYG_02g0018440.01">
    <property type="protein sequence ID" value="OsKYG_02g0018440.01"/>
    <property type="gene ID" value="OsKYG_02g0018440"/>
</dbReference>
<dbReference type="EnsemblPlants" id="OsLima_02g0018730.01">
    <property type="protein sequence ID" value="OsLima_02g0018730.01"/>
    <property type="gene ID" value="OsLima_02g0018730"/>
</dbReference>
<dbReference type="EnsemblPlants" id="OsLiXu_02g0018610.01">
    <property type="protein sequence ID" value="OsLiXu_02g0018610.01"/>
    <property type="gene ID" value="OsLiXu_02g0018610"/>
</dbReference>
<dbReference type="EnsemblPlants" id="OsMH63_02G018870_01">
    <property type="protein sequence ID" value="OsMH63_02G018870_01"/>
    <property type="gene ID" value="OsMH63_02G018870"/>
</dbReference>
<dbReference type="EnsemblPlants" id="OsPr106_02g0018490.01">
    <property type="protein sequence ID" value="OsPr106_02g0018490.01"/>
    <property type="gene ID" value="OsPr106_02g0018490"/>
</dbReference>
<dbReference type="EnsemblPlants" id="OsZS97_02G018270_01">
    <property type="protein sequence ID" value="OsZS97_02G018270_01"/>
    <property type="gene ID" value="OsZS97_02G018270"/>
</dbReference>
<dbReference type="Gramene" id="BGIOSGA006395-TA">
    <property type="protein sequence ID" value="BGIOSGA006395-PA"/>
    <property type="gene ID" value="BGIOSGA006395"/>
</dbReference>
<dbReference type="Gramene" id="OsKYG_02g0018440.01">
    <property type="protein sequence ID" value="OsKYG_02g0018440.01"/>
    <property type="gene ID" value="OsKYG_02g0018440"/>
</dbReference>
<dbReference type="Gramene" id="OsLima_02g0018730.01">
    <property type="protein sequence ID" value="OsLima_02g0018730.01"/>
    <property type="gene ID" value="OsLima_02g0018730"/>
</dbReference>
<dbReference type="Gramene" id="OsLiXu_02g0018610.01">
    <property type="protein sequence ID" value="OsLiXu_02g0018610.01"/>
    <property type="gene ID" value="OsLiXu_02g0018610"/>
</dbReference>
<dbReference type="Gramene" id="OsMH63_02G018870_01">
    <property type="protein sequence ID" value="OsMH63_02G018870_01"/>
    <property type="gene ID" value="OsMH63_02G018870"/>
</dbReference>
<dbReference type="Gramene" id="OsPr106_02g0018490.01">
    <property type="protein sequence ID" value="OsPr106_02g0018490.01"/>
    <property type="gene ID" value="OsPr106_02g0018490"/>
</dbReference>
<dbReference type="Gramene" id="OsZS97_02G018270_01">
    <property type="protein sequence ID" value="OsZS97_02G018270_01"/>
    <property type="gene ID" value="OsZS97_02G018270"/>
</dbReference>
<dbReference type="HOGENOM" id="CLU_048643_4_0_1"/>
<dbReference type="OMA" id="ERSTWAF"/>
<dbReference type="Proteomes" id="UP000007015">
    <property type="component" value="Chromosome 2"/>
</dbReference>
<dbReference type="GO" id="GO:0005886">
    <property type="term" value="C:plasma membrane"/>
    <property type="evidence" value="ECO:0000250"/>
    <property type="project" value="UniProtKB"/>
</dbReference>
<dbReference type="GO" id="GO:0051119">
    <property type="term" value="F:sugar transmembrane transporter activity"/>
    <property type="evidence" value="ECO:0000250"/>
    <property type="project" value="UniProtKB"/>
</dbReference>
<dbReference type="FunFam" id="1.20.1280.290:FF:000001">
    <property type="entry name" value="Bidirectional sugar transporter SWEET"/>
    <property type="match status" value="1"/>
</dbReference>
<dbReference type="FunFam" id="1.20.1280.290:FF:000003">
    <property type="entry name" value="Bidirectional sugar transporter SWEET"/>
    <property type="match status" value="1"/>
</dbReference>
<dbReference type="Gene3D" id="1.20.1280.290">
    <property type="match status" value="2"/>
</dbReference>
<dbReference type="InterPro" id="IPR047664">
    <property type="entry name" value="SWEET"/>
</dbReference>
<dbReference type="InterPro" id="IPR004316">
    <property type="entry name" value="SWEET_rpt"/>
</dbReference>
<dbReference type="PANTHER" id="PTHR10791:SF50">
    <property type="entry name" value="BIDIRECTIONAL SUGAR TRANSPORTER SWEET15"/>
    <property type="match status" value="1"/>
</dbReference>
<dbReference type="PANTHER" id="PTHR10791">
    <property type="entry name" value="RAG1-ACTIVATING PROTEIN 1"/>
    <property type="match status" value="1"/>
</dbReference>
<dbReference type="Pfam" id="PF03083">
    <property type="entry name" value="MtN3_slv"/>
    <property type="match status" value="2"/>
</dbReference>
<proteinExistence type="inferred from homology"/>
<name>SWT15_ORYSI</name>
<reference key="1">
    <citation type="journal article" date="2005" name="PLoS Biol.">
        <title>The genomes of Oryza sativa: a history of duplications.</title>
        <authorList>
            <person name="Yu J."/>
            <person name="Wang J."/>
            <person name="Lin W."/>
            <person name="Li S."/>
            <person name="Li H."/>
            <person name="Zhou J."/>
            <person name="Ni P."/>
            <person name="Dong W."/>
            <person name="Hu S."/>
            <person name="Zeng C."/>
            <person name="Zhang J."/>
            <person name="Zhang Y."/>
            <person name="Li R."/>
            <person name="Xu Z."/>
            <person name="Li S."/>
            <person name="Li X."/>
            <person name="Zheng H."/>
            <person name="Cong L."/>
            <person name="Lin L."/>
            <person name="Yin J."/>
            <person name="Geng J."/>
            <person name="Li G."/>
            <person name="Shi J."/>
            <person name="Liu J."/>
            <person name="Lv H."/>
            <person name="Li J."/>
            <person name="Wang J."/>
            <person name="Deng Y."/>
            <person name="Ran L."/>
            <person name="Shi X."/>
            <person name="Wang X."/>
            <person name="Wu Q."/>
            <person name="Li C."/>
            <person name="Ren X."/>
            <person name="Wang J."/>
            <person name="Wang X."/>
            <person name="Li D."/>
            <person name="Liu D."/>
            <person name="Zhang X."/>
            <person name="Ji Z."/>
            <person name="Zhao W."/>
            <person name="Sun Y."/>
            <person name="Zhang Z."/>
            <person name="Bao J."/>
            <person name="Han Y."/>
            <person name="Dong L."/>
            <person name="Ji J."/>
            <person name="Chen P."/>
            <person name="Wu S."/>
            <person name="Liu J."/>
            <person name="Xiao Y."/>
            <person name="Bu D."/>
            <person name="Tan J."/>
            <person name="Yang L."/>
            <person name="Ye C."/>
            <person name="Zhang J."/>
            <person name="Xu J."/>
            <person name="Zhou Y."/>
            <person name="Yu Y."/>
            <person name="Zhang B."/>
            <person name="Zhuang S."/>
            <person name="Wei H."/>
            <person name="Liu B."/>
            <person name="Lei M."/>
            <person name="Yu H."/>
            <person name="Li Y."/>
            <person name="Xu H."/>
            <person name="Wei S."/>
            <person name="He X."/>
            <person name="Fang L."/>
            <person name="Zhang Z."/>
            <person name="Zhang Y."/>
            <person name="Huang X."/>
            <person name="Su Z."/>
            <person name="Tong W."/>
            <person name="Li J."/>
            <person name="Tong Z."/>
            <person name="Li S."/>
            <person name="Ye J."/>
            <person name="Wang L."/>
            <person name="Fang L."/>
            <person name="Lei T."/>
            <person name="Chen C.-S."/>
            <person name="Chen H.-C."/>
            <person name="Xu Z."/>
            <person name="Li H."/>
            <person name="Huang H."/>
            <person name="Zhang F."/>
            <person name="Xu H."/>
            <person name="Li N."/>
            <person name="Zhao C."/>
            <person name="Li S."/>
            <person name="Dong L."/>
            <person name="Huang Y."/>
            <person name="Li L."/>
            <person name="Xi Y."/>
            <person name="Qi Q."/>
            <person name="Li W."/>
            <person name="Zhang B."/>
            <person name="Hu W."/>
            <person name="Zhang Y."/>
            <person name="Tian X."/>
            <person name="Jiao Y."/>
            <person name="Liang X."/>
            <person name="Jin J."/>
            <person name="Gao L."/>
            <person name="Zheng W."/>
            <person name="Hao B."/>
            <person name="Liu S.-M."/>
            <person name="Wang W."/>
            <person name="Yuan L."/>
            <person name="Cao M."/>
            <person name="McDermott J."/>
            <person name="Samudrala R."/>
            <person name="Wang J."/>
            <person name="Wong G.K.-S."/>
            <person name="Yang H."/>
        </authorList>
    </citation>
    <scope>NUCLEOTIDE SEQUENCE [LARGE SCALE GENOMIC DNA]</scope>
    <source>
        <strain>cv. 93-11</strain>
    </source>
</reference>
<protein>
    <recommendedName>
        <fullName>Bidirectional sugar transporter SWEET15</fullName>
        <shortName>OsSWEET15</shortName>
    </recommendedName>
</protein>
<keyword id="KW-1003">Cell membrane</keyword>
<keyword id="KW-0472">Membrane</keyword>
<keyword id="KW-1185">Reference proteome</keyword>
<keyword id="KW-0677">Repeat</keyword>
<keyword id="KW-0762">Sugar transport</keyword>
<keyword id="KW-0812">Transmembrane</keyword>
<keyword id="KW-1133">Transmembrane helix</keyword>
<keyword id="KW-0813">Transport</keyword>